<accession>A8GQC1</accession>
<proteinExistence type="inferred from homology"/>
<protein>
    <recommendedName>
        <fullName evidence="1">Uroporphyrinogen decarboxylase</fullName>
        <shortName evidence="1">UPD</shortName>
        <shortName evidence="1">URO-D</shortName>
        <ecNumber evidence="1">4.1.1.37</ecNumber>
    </recommendedName>
</protein>
<feature type="chain" id="PRO_1000023959" description="Uroporphyrinogen decarboxylase">
    <location>
        <begin position="1"/>
        <end position="338"/>
    </location>
</feature>
<feature type="binding site" evidence="1">
    <location>
        <begin position="21"/>
        <end position="25"/>
    </location>
    <ligand>
        <name>substrate</name>
    </ligand>
</feature>
<feature type="binding site" evidence="1">
    <location>
        <position position="71"/>
    </location>
    <ligand>
        <name>substrate</name>
    </ligand>
</feature>
<feature type="binding site" evidence="1">
    <location>
        <position position="146"/>
    </location>
    <ligand>
        <name>substrate</name>
    </ligand>
</feature>
<feature type="binding site" evidence="1">
    <location>
        <position position="201"/>
    </location>
    <ligand>
        <name>substrate</name>
    </ligand>
</feature>
<feature type="binding site" evidence="1">
    <location>
        <position position="316"/>
    </location>
    <ligand>
        <name>substrate</name>
    </ligand>
</feature>
<feature type="site" description="Transition state stabilizer" evidence="1">
    <location>
        <position position="71"/>
    </location>
</feature>
<evidence type="ECO:0000255" key="1">
    <source>
        <dbReference type="HAMAP-Rule" id="MF_00218"/>
    </source>
</evidence>
<reference key="1">
    <citation type="submission" date="2007-09" db="EMBL/GenBank/DDBJ databases">
        <title>Complete genome sequence of Rickettsia akari.</title>
        <authorList>
            <person name="Madan A."/>
            <person name="Fahey J."/>
            <person name="Helton E."/>
            <person name="Ketteman M."/>
            <person name="Madan A."/>
            <person name="Rodrigues S."/>
            <person name="Sanchez A."/>
            <person name="Whiting M."/>
            <person name="Dasch G."/>
            <person name="Eremeeva M."/>
        </authorList>
    </citation>
    <scope>NUCLEOTIDE SEQUENCE [LARGE SCALE GENOMIC DNA]</scope>
    <source>
        <strain>Hartford</strain>
    </source>
</reference>
<comment type="function">
    <text evidence="1">Catalyzes the decarboxylation of four acetate groups of uroporphyrinogen-III to yield coproporphyrinogen-III.</text>
</comment>
<comment type="catalytic activity">
    <reaction evidence="1">
        <text>uroporphyrinogen III + 4 H(+) = coproporphyrinogen III + 4 CO2</text>
        <dbReference type="Rhea" id="RHEA:19865"/>
        <dbReference type="ChEBI" id="CHEBI:15378"/>
        <dbReference type="ChEBI" id="CHEBI:16526"/>
        <dbReference type="ChEBI" id="CHEBI:57308"/>
        <dbReference type="ChEBI" id="CHEBI:57309"/>
        <dbReference type="EC" id="4.1.1.37"/>
    </reaction>
</comment>
<comment type="pathway">
    <text evidence="1">Porphyrin-containing compound metabolism; protoporphyrin-IX biosynthesis; coproporphyrinogen-III from 5-aminolevulinate: step 4/4.</text>
</comment>
<comment type="subunit">
    <text evidence="1">Homodimer.</text>
</comment>
<comment type="subcellular location">
    <subcellularLocation>
        <location evidence="1">Cytoplasm</location>
    </subcellularLocation>
</comment>
<comment type="similarity">
    <text evidence="1">Belongs to the uroporphyrinogen decarboxylase family.</text>
</comment>
<sequence>MNQISNPLKGNNNKIPIWFMRQAGRYLSEYKKVRETTKNFLDFCYDVNKATEVTLQPIKRYGFDAAIIFSDILVLPHAFGWEIDFKENIGPILKQFKSQEDFKYLQSNPNNKLGKVYEIIKKVKADLTSTTSLIGFAGSPWTVMSYMLEGKGKHDFKTSKKFIYENKILAKELLNFITEKTADHLINQAKSGADVLKLFDSWSGVLPEDEFTKFVIEPTKKIILKVKEVFPKIPMIAFPKGAGLLYEKFIKEVPVDILAVDQMVPLEKMKKWSDKVIVQGNLDPVVLLTNKEIIKEKAYKIIQEMKGKNFIFNLGHGILPKTPPENVEFLTECIRSCE</sequence>
<organism>
    <name type="scientific">Rickettsia akari (strain Hartford)</name>
    <dbReference type="NCBI Taxonomy" id="293614"/>
    <lineage>
        <taxon>Bacteria</taxon>
        <taxon>Pseudomonadati</taxon>
        <taxon>Pseudomonadota</taxon>
        <taxon>Alphaproteobacteria</taxon>
        <taxon>Rickettsiales</taxon>
        <taxon>Rickettsiaceae</taxon>
        <taxon>Rickettsieae</taxon>
        <taxon>Rickettsia</taxon>
        <taxon>spotted fever group</taxon>
    </lineage>
</organism>
<gene>
    <name evidence="1" type="primary">hemE</name>
    <name type="ordered locus">A1C_06880</name>
</gene>
<dbReference type="EC" id="4.1.1.37" evidence="1"/>
<dbReference type="EMBL" id="CP000847">
    <property type="protein sequence ID" value="ABV75596.1"/>
    <property type="molecule type" value="Genomic_DNA"/>
</dbReference>
<dbReference type="RefSeq" id="WP_012150224.1">
    <property type="nucleotide sequence ID" value="NC_009881.1"/>
</dbReference>
<dbReference type="SMR" id="A8GQC1"/>
<dbReference type="STRING" id="293614.A1C_06880"/>
<dbReference type="KEGG" id="rak:A1C_06880"/>
<dbReference type="eggNOG" id="COG0407">
    <property type="taxonomic scope" value="Bacteria"/>
</dbReference>
<dbReference type="HOGENOM" id="CLU_040933_0_0_5"/>
<dbReference type="UniPathway" id="UPA00251">
    <property type="reaction ID" value="UER00321"/>
</dbReference>
<dbReference type="Proteomes" id="UP000006830">
    <property type="component" value="Chromosome"/>
</dbReference>
<dbReference type="GO" id="GO:0005829">
    <property type="term" value="C:cytosol"/>
    <property type="evidence" value="ECO:0007669"/>
    <property type="project" value="TreeGrafter"/>
</dbReference>
<dbReference type="GO" id="GO:0004853">
    <property type="term" value="F:uroporphyrinogen decarboxylase activity"/>
    <property type="evidence" value="ECO:0007669"/>
    <property type="project" value="UniProtKB-UniRule"/>
</dbReference>
<dbReference type="GO" id="GO:0006782">
    <property type="term" value="P:protoporphyrinogen IX biosynthetic process"/>
    <property type="evidence" value="ECO:0007669"/>
    <property type="project" value="UniProtKB-UniRule"/>
</dbReference>
<dbReference type="CDD" id="cd00717">
    <property type="entry name" value="URO-D"/>
    <property type="match status" value="1"/>
</dbReference>
<dbReference type="FunFam" id="3.20.20.210:FF:000007">
    <property type="entry name" value="Uroporphyrinogen decarboxylase"/>
    <property type="match status" value="1"/>
</dbReference>
<dbReference type="Gene3D" id="3.20.20.210">
    <property type="match status" value="1"/>
</dbReference>
<dbReference type="HAMAP" id="MF_00218">
    <property type="entry name" value="URO_D"/>
    <property type="match status" value="1"/>
</dbReference>
<dbReference type="InterPro" id="IPR038071">
    <property type="entry name" value="UROD/MetE-like_sf"/>
</dbReference>
<dbReference type="InterPro" id="IPR006361">
    <property type="entry name" value="Uroporphyrinogen_deCO2ase_HemE"/>
</dbReference>
<dbReference type="InterPro" id="IPR000257">
    <property type="entry name" value="Uroporphyrinogen_deCOase"/>
</dbReference>
<dbReference type="NCBIfam" id="TIGR01464">
    <property type="entry name" value="hemE"/>
    <property type="match status" value="1"/>
</dbReference>
<dbReference type="PANTHER" id="PTHR21091">
    <property type="entry name" value="METHYLTETRAHYDROFOLATE:HOMOCYSTEINE METHYLTRANSFERASE RELATED"/>
    <property type="match status" value="1"/>
</dbReference>
<dbReference type="PANTHER" id="PTHR21091:SF169">
    <property type="entry name" value="UROPORPHYRINOGEN DECARBOXYLASE"/>
    <property type="match status" value="1"/>
</dbReference>
<dbReference type="Pfam" id="PF01208">
    <property type="entry name" value="URO-D"/>
    <property type="match status" value="1"/>
</dbReference>
<dbReference type="SUPFAM" id="SSF51726">
    <property type="entry name" value="UROD/MetE-like"/>
    <property type="match status" value="1"/>
</dbReference>
<dbReference type="PROSITE" id="PS00906">
    <property type="entry name" value="UROD_1"/>
    <property type="match status" value="1"/>
</dbReference>
<dbReference type="PROSITE" id="PS00907">
    <property type="entry name" value="UROD_2"/>
    <property type="match status" value="1"/>
</dbReference>
<name>DCUP_RICAH</name>
<keyword id="KW-0963">Cytoplasm</keyword>
<keyword id="KW-0210">Decarboxylase</keyword>
<keyword id="KW-0456">Lyase</keyword>
<keyword id="KW-0627">Porphyrin biosynthesis</keyword>